<evidence type="ECO:0000250" key="1">
    <source>
        <dbReference type="UniProtKB" id="O75173"/>
    </source>
</evidence>
<evidence type="ECO:0000255" key="2"/>
<evidence type="ECO:0000255" key="3">
    <source>
        <dbReference type="PROSITE-ProRule" id="PRU00276"/>
    </source>
</evidence>
<evidence type="ECO:0000255" key="4">
    <source>
        <dbReference type="PROSITE-ProRule" id="PRU00498"/>
    </source>
</evidence>
<evidence type="ECO:0000256" key="5">
    <source>
        <dbReference type="SAM" id="MobiDB-lite"/>
    </source>
</evidence>
<evidence type="ECO:0000269" key="6">
    <source>
    </source>
</evidence>
<evidence type="ECO:0000269" key="7">
    <source>
    </source>
</evidence>
<evidence type="ECO:0000303" key="8">
    <source>
    </source>
</evidence>
<evidence type="ECO:0000303" key="9">
    <source>
    </source>
</evidence>
<evidence type="ECO:0000305" key="10"/>
<evidence type="ECO:0000305" key="11">
    <source>
    </source>
</evidence>
<evidence type="ECO:0000305" key="12">
    <source>
    </source>
</evidence>
<evidence type="ECO:0000312" key="13">
    <source>
        <dbReference type="EMBL" id="BAD69560.1"/>
    </source>
</evidence>
<evidence type="ECO:0000312" key="14">
    <source>
        <dbReference type="EnsemblMetazoa" id="NP_001036935.1"/>
    </source>
</evidence>
<evidence type="ECO:0000312" key="15">
    <source>
        <dbReference type="Proteomes" id="UP000005204"/>
    </source>
</evidence>
<organism evidence="13">
    <name type="scientific">Bombyx mori</name>
    <name type="common">Silk moth</name>
    <dbReference type="NCBI Taxonomy" id="7091"/>
    <lineage>
        <taxon>Eukaryota</taxon>
        <taxon>Metazoa</taxon>
        <taxon>Ecdysozoa</taxon>
        <taxon>Arthropoda</taxon>
        <taxon>Hexapoda</taxon>
        <taxon>Insecta</taxon>
        <taxon>Pterygota</taxon>
        <taxon>Neoptera</taxon>
        <taxon>Endopterygota</taxon>
        <taxon>Lepidoptera</taxon>
        <taxon>Glossata</taxon>
        <taxon>Ditrysia</taxon>
        <taxon>Bombycoidea</taxon>
        <taxon>Bombycidae</taxon>
        <taxon>Bombycinae</taxon>
        <taxon>Bombyx</taxon>
    </lineage>
</organism>
<feature type="signal peptide" evidence="2">
    <location>
        <begin position="1"/>
        <end position="24"/>
    </location>
</feature>
<feature type="chain" id="PRO_5004263248" description="A disintegrin and metalloproteinase with thrombospondin motifs like" evidence="2">
    <location>
        <begin position="25"/>
        <end position="693"/>
    </location>
</feature>
<feature type="domain" description="Peptidase M12B" evidence="3">
    <location>
        <begin position="353"/>
        <end position="585"/>
    </location>
</feature>
<feature type="region of interest" description="Disordered" evidence="5">
    <location>
        <begin position="67"/>
        <end position="91"/>
    </location>
</feature>
<feature type="short sequence motif" description="Metal-binding" evidence="11">
    <location>
        <begin position="514"/>
        <end position="525"/>
    </location>
</feature>
<feature type="compositionally biased region" description="Polar residues" evidence="5">
    <location>
        <begin position="67"/>
        <end position="80"/>
    </location>
</feature>
<feature type="active site" evidence="3">
    <location>
        <position position="515"/>
    </location>
</feature>
<feature type="binding site" evidence="3">
    <location>
        <position position="514"/>
    </location>
    <ligand>
        <name>Zn(2+)</name>
        <dbReference type="ChEBI" id="CHEBI:29105"/>
        <note>catalytic</note>
    </ligand>
</feature>
<feature type="binding site" evidence="3">
    <location>
        <position position="518"/>
    </location>
    <ligand>
        <name>Zn(2+)</name>
        <dbReference type="ChEBI" id="CHEBI:29105"/>
        <note>catalytic</note>
    </ligand>
</feature>
<feature type="binding site" evidence="3">
    <location>
        <position position="524"/>
    </location>
    <ligand>
        <name>Zn(2+)</name>
        <dbReference type="ChEBI" id="CHEBI:29105"/>
        <note>catalytic</note>
    </ligand>
</feature>
<feature type="glycosylation site" description="N-linked (GlcNAc...) asparagine" evidence="4">
    <location>
        <position position="124"/>
    </location>
</feature>
<feature type="glycosylation site" description="N-linked (GlcNAc...) asparagine" evidence="4">
    <location>
        <position position="194"/>
    </location>
</feature>
<feature type="glycosylation site" description="N-linked (GlcNAc...) asparagine" evidence="4">
    <location>
        <position position="687"/>
    </location>
</feature>
<feature type="disulfide bond" evidence="3">
    <location>
        <begin position="485"/>
        <end position="580"/>
    </location>
</feature>
<feature type="disulfide bond" evidence="3">
    <location>
        <begin position="541"/>
        <end position="564"/>
    </location>
</feature>
<dbReference type="EC" id="3.4.24.-" evidence="10"/>
<dbReference type="EMBL" id="AB194271">
    <property type="protein sequence ID" value="BAD69560.1"/>
    <property type="molecule type" value="mRNA"/>
</dbReference>
<dbReference type="EMBL" id="BHWX01000020">
    <property type="status" value="NOT_ANNOTATED_CDS"/>
    <property type="molecule type" value="Genomic_DNA"/>
</dbReference>
<dbReference type="RefSeq" id="NP_001036935.1">
    <property type="nucleotide sequence ID" value="NM_001043470.1"/>
</dbReference>
<dbReference type="SMR" id="Q5W7F3"/>
<dbReference type="MEROPS" id="M12.A51"/>
<dbReference type="EnsemblMetazoa" id="NM_001043470.1">
    <property type="protein sequence ID" value="NP_001036935.1"/>
    <property type="gene ID" value="GeneID_692481"/>
</dbReference>
<dbReference type="GeneID" id="692481"/>
<dbReference type="KEGG" id="bmor:692481"/>
<dbReference type="CTD" id="692481"/>
<dbReference type="Proteomes" id="UP000005204">
    <property type="component" value="Unassembled WGS sequence"/>
</dbReference>
<dbReference type="GO" id="GO:0005576">
    <property type="term" value="C:extracellular region"/>
    <property type="evidence" value="ECO:0007669"/>
    <property type="project" value="UniProtKB-KW"/>
</dbReference>
<dbReference type="GO" id="GO:0004222">
    <property type="term" value="F:metalloendopeptidase activity"/>
    <property type="evidence" value="ECO:0007669"/>
    <property type="project" value="InterPro"/>
</dbReference>
<dbReference type="GO" id="GO:0008270">
    <property type="term" value="F:zinc ion binding"/>
    <property type="evidence" value="ECO:0000250"/>
    <property type="project" value="UniProtKB"/>
</dbReference>
<dbReference type="GO" id="GO:0002168">
    <property type="term" value="P:instar larval development"/>
    <property type="evidence" value="ECO:0000270"/>
    <property type="project" value="UniProtKB"/>
</dbReference>
<dbReference type="GO" id="GO:0006509">
    <property type="term" value="P:membrane protein ectodomain proteolysis"/>
    <property type="evidence" value="ECO:0007669"/>
    <property type="project" value="TreeGrafter"/>
</dbReference>
<dbReference type="GO" id="GO:0007552">
    <property type="term" value="P:metamorphosis"/>
    <property type="evidence" value="ECO:0000270"/>
    <property type="project" value="UniProtKB"/>
</dbReference>
<dbReference type="GO" id="GO:0022404">
    <property type="term" value="P:molting cycle process"/>
    <property type="evidence" value="ECO:0000270"/>
    <property type="project" value="UniProtKB"/>
</dbReference>
<dbReference type="GO" id="GO:0035074">
    <property type="term" value="P:pupation"/>
    <property type="evidence" value="ECO:0000270"/>
    <property type="project" value="UniProtKB"/>
</dbReference>
<dbReference type="CDD" id="cd04272">
    <property type="entry name" value="ZnMc_salivary_gland_MPs"/>
    <property type="match status" value="1"/>
</dbReference>
<dbReference type="Gene3D" id="3.40.1620.60">
    <property type="match status" value="1"/>
</dbReference>
<dbReference type="Gene3D" id="3.40.390.10">
    <property type="entry name" value="Collagenase (Catalytic Domain)"/>
    <property type="match status" value="1"/>
</dbReference>
<dbReference type="InterPro" id="IPR041645">
    <property type="entry name" value="ADAMTS_CR_2"/>
</dbReference>
<dbReference type="InterPro" id="IPR024079">
    <property type="entry name" value="MetalloPept_cat_dom_sf"/>
</dbReference>
<dbReference type="InterPro" id="IPR001590">
    <property type="entry name" value="Peptidase_M12B"/>
</dbReference>
<dbReference type="InterPro" id="IPR034030">
    <property type="entry name" value="ZnMc_salivary_gland_MPs"/>
</dbReference>
<dbReference type="PANTHER" id="PTHR11905">
    <property type="entry name" value="ADAM A DISINTEGRIN AND METALLOPROTEASE DOMAIN"/>
    <property type="match status" value="1"/>
</dbReference>
<dbReference type="PANTHER" id="PTHR11905:SF249">
    <property type="entry name" value="SOL NARAE, ISOFORM C"/>
    <property type="match status" value="1"/>
</dbReference>
<dbReference type="Pfam" id="PF17771">
    <property type="entry name" value="ADAMTS_CR_2"/>
    <property type="match status" value="1"/>
</dbReference>
<dbReference type="Pfam" id="PF13582">
    <property type="entry name" value="Reprolysin_3"/>
    <property type="match status" value="1"/>
</dbReference>
<dbReference type="SUPFAM" id="SSF55486">
    <property type="entry name" value="Metalloproteases ('zincins'), catalytic domain"/>
    <property type="match status" value="1"/>
</dbReference>
<dbReference type="PROSITE" id="PS50215">
    <property type="entry name" value="ADAM_MEPRO"/>
    <property type="match status" value="1"/>
</dbReference>
<dbReference type="PROSITE" id="PS00142">
    <property type="entry name" value="ZINC_PROTEASE"/>
    <property type="match status" value="1"/>
</dbReference>
<accession>Q5W7F3</accession>
<gene>
    <name evidence="9" type="primary">ADAMTS-L</name>
    <name evidence="14" type="synonym">692481</name>
</gene>
<sequence>MESSVATHWLSAFVILCSFITTQSLNNKIHEHMTIDELRNVFHVEHHSRVPEYHLVQLTHHLARRNIPTSHPANSNSADSGKTPHLKTEKVTKGGYKAPSLLNDEMFVEAKKRIEDVDIMGDPNSTVSVDFKVQSSEFGDSESLSDKEHSAESQEDGVHKIDLEAFGRQLKLVLKKQEGLIKKDGLKVWKALKNETQPHGVDYEEMITEDDEEFGDLYQDEENGAALLIRRHPKHGKLVVEGSIGHDLVIRPIPDTMTSPAQDDEMFMDPSSMADMVSIDTGLPIMKRKKEEQDRLQEALNGAQHVIIKRDPAEVDHMSDYAFMEPDHIGKRYRRKRSAEAHNRQKREAPYVIYPEILVIVDYDGYRLHGGDNVQIKRYFVSFWNGVDLRYKLLKGPRIRISIAGIIISRGRDATPYLERNRVGRDAIDSAAALTDMGKYLFRERRLPVYDIAVAITKLDMCRRQYANDACNRGTAGFAYVGGACVVNKRLEKVNSVAIIEDTGGFSGIIVAAHEVGHLLGAVHDGSPPPSYLGGPGAEKCRWEDGFIMSDLRHTEKGFRWSPCSVQSFHHFLNGDTATCLYNSPHEDDSLPRVLPGRLLTLDAQCRKDRGTSACFKDERVCAQLFCFDAGSGYCVAYRPAAEGSPCGDGQYCINGQCITEHENIIPDYSQHTPSYVRPETSPFYANITSSRH</sequence>
<name>ATSL_BOMMO</name>
<comment type="function">
    <text evidence="11 12">Involved in larval molting and metamorphosis. May degrade extracellular matrix (ECM) and basement membrane (BM) during the development of organs to allow degeneration and remodeling of tissues.</text>
</comment>
<comment type="cofactor">
    <cofactor evidence="1">
        <name>Zn(2+)</name>
        <dbReference type="ChEBI" id="CHEBI:29105"/>
    </cofactor>
    <text evidence="1">Binds 1 zinc ion per subunit.</text>
</comment>
<comment type="subcellular location">
    <subcellularLocation>
        <location evidence="10">Secreted</location>
        <location evidence="10">Extracellular space</location>
        <location evidence="10">Extracellular matrix</location>
    </subcellularLocation>
</comment>
<comment type="developmental stage">
    <text evidence="6 7">Expressed in epidermis and wing disks, and at a lower level in midgut, on day 2 of the wandering stage (W2) larvae (PubMed:15898116). In wing disks, expression increases from W2, peaking on day 3 of the wandering stage (W3) and decreasing thereafter. In fat body, expression peaks sharply at W3 and then decreases. In midgut, shows a sharp peak on the day of pupation (P0). In silk glands, low expression peaking at W3. In hemocytes, expression peaks at W3. Overall low expression level in all the organs examined (PubMed:28943345).</text>
</comment>
<comment type="induction">
    <text evidence="6 7">Expression is induced in epidermis during the 4th ecdysis, pupal ecdysis, pupal stage and eclosion (PubMed:15898116). Induced by 20-hydroxyecdysone in the cultured wing imaginal disks, but not in fat bodies, of day 5 fifth larval instar (PubMed:28943345).</text>
</comment>
<keyword id="KW-1015">Disulfide bond</keyword>
<keyword id="KW-0272">Extracellular matrix</keyword>
<keyword id="KW-0325">Glycoprotein</keyword>
<keyword id="KW-0378">Hydrolase</keyword>
<keyword id="KW-0479">Metal-binding</keyword>
<keyword id="KW-0482">Metalloprotease</keyword>
<keyword id="KW-0645">Protease</keyword>
<keyword id="KW-1185">Reference proteome</keyword>
<keyword id="KW-0964">Secreted</keyword>
<keyword id="KW-0732">Signal</keyword>
<keyword id="KW-0862">Zinc</keyword>
<reference evidence="13" key="1">
    <citation type="journal article" date="2005" name="Arch. Insect Biochem. Physiol.">
        <title>Characteristics of two genes encoding proteins with an ADAM-type metalloprotease domain, which are induced during the molting periods in Bombyx mori.</title>
        <authorList>
            <person name="Ote M."/>
            <person name="Mita K."/>
            <person name="Kawasaki H."/>
            <person name="Kobayashi M."/>
            <person name="Shimada T."/>
        </authorList>
    </citation>
    <scope>NUCLEOTIDE SEQUENCE [MRNA]</scope>
    <scope>FUNCTION</scope>
    <scope>DEVELOPMENTAL STAGE</scope>
    <scope>INDUCTION</scope>
    <scope>MOTIF</scope>
    <source>
        <tissue evidence="8">Wing imaginal disk</tissue>
    </source>
</reference>
<reference evidence="15" key="2">
    <citation type="journal article" date="2008" name="Insect Biochem. Mol. Biol.">
        <title>The genome of a lepidopteran model insect, the silkworm Bombyx mori.</title>
        <authorList>
            <consortium name="International Silkworm Genome Consortium"/>
        </authorList>
    </citation>
    <scope>NUCLEOTIDE SEQUENCE [LARGE SCALE GENOMIC DNA]</scope>
    <source>
        <strain evidence="15">p50T</strain>
    </source>
</reference>
<reference key="3">
    <citation type="journal article" date="2018" name="Gene">
        <title>Expression of matrix metalloproteinase genes during basement membrane degradation in the metamorphosis of Bombyx mori.</title>
        <authorList>
            <person name="Kawasaki H."/>
            <person name="Manickam A."/>
            <person name="Shahin R."/>
            <person name="Ote M."/>
            <person name="Iwanaga M."/>
        </authorList>
    </citation>
    <scope>FUNCTION</scope>
    <scope>DEVELOPMENTAL STAGE</scope>
    <scope>INDUCTION</scope>
</reference>
<proteinExistence type="evidence at transcript level"/>
<protein>
    <recommendedName>
        <fullName evidence="8 9 13">A disintegrin and metalloproteinase with thrombospondin motifs like</fullName>
        <shortName evidence="8 9">ADAMTS-like</shortName>
        <ecNumber evidence="10">3.4.24.-</ecNumber>
    </recommendedName>
    <alternativeName>
        <fullName evidence="8 9">BmADAMTS-like</fullName>
    </alternativeName>
</protein>